<accession>Q289M4</accession>
<comment type="function">
    <text evidence="1">Catalyzes the removal of terminal sialic acid residues from viral and cellular glycoconjugates. Cleaves off the terminal sialic acids on the glycosylated HA during virus budding to facilitate virus release. Additionally helps virus spread through the circulation by further removing sialic acids from the cell surface. These cleavages prevent self-aggregation and ensure the efficient spread of the progeny virus from cell to cell. Otherwise, infection would be limited to one round of replication. Described as a receptor-destroying enzyme because it cleaves a terminal sialic acid from the cellular receptors. May facilitate viral invasion of the upper airways by cleaving the sialic acid moieties on the mucin of the airway epithelial cells. Likely to plays a role in the budding process through its association with lipid rafts during intracellular transport. May additionally display a raft-association independent effect on budding. Plays a role in the determination of host range restriction on replication and virulence. Sialidase activity in late endosome/lysosome traffic seems to enhance virus replication.</text>
</comment>
<comment type="catalytic activity">
    <reaction evidence="1">
        <text>Hydrolysis of alpha-(2-&gt;3)-, alpha-(2-&gt;6)-, alpha-(2-&gt;8)- glycosidic linkages of terminal sialic acid residues in oligosaccharides, glycoproteins, glycolipids, colominic acid and synthetic substrates.</text>
        <dbReference type="EC" id="3.2.1.18"/>
    </reaction>
</comment>
<comment type="cofactor">
    <cofactor evidence="1">
        <name>Ca(2+)</name>
        <dbReference type="ChEBI" id="CHEBI:29108"/>
    </cofactor>
</comment>
<comment type="activity regulation">
    <text evidence="1">Inhibited by the neuraminidase inhibitors zanamivir (Relenza) and oseltamivir (Tamiflu). These drugs interfere with the release of progeny virus from infected cells and are effective against all influenza strains. Resistance to neuraminidase inhibitors is quite rare.</text>
</comment>
<comment type="subunit">
    <text evidence="1">Homotetramer.</text>
</comment>
<comment type="subcellular location">
    <subcellularLocation>
        <location evidence="1">Virion membrane</location>
    </subcellularLocation>
    <subcellularLocation>
        <location evidence="1">Host apical cell membrane</location>
        <topology evidence="1">Single-pass type II membrane protein</topology>
    </subcellularLocation>
    <text evidence="1">Preferentially accumulates at the apical plasma membrane in infected polarized epithelial cells, which is the virus assembly site. Uses lipid rafts for cell surface transport and apical sorting. In the virion, forms a mushroom-shaped spike on the surface of the membrane.</text>
</comment>
<comment type="domain">
    <text evidence="1">Intact N-terminus is essential for virion morphogenesis. Possesses two apical sorting signals, one in the ectodomain, which is likely to be a glycan, and the other in the transmembrane domain. The transmembrane domain also plays a role in lipid raft association.</text>
</comment>
<comment type="PTM">
    <text evidence="1">N-glycosylated.</text>
</comment>
<comment type="miscellaneous">
    <text>The influenza A genome consist of 8 RNA segments. Genetic variation of hemagglutinin and/or neuraminidase genes results in the emergence of new influenza strains. The mechanism of variation can be the result of point mutations or the result of genetic reassortment between segments of two different strains.</text>
</comment>
<comment type="similarity">
    <text evidence="1">Belongs to the glycosyl hydrolase 34 family.</text>
</comment>
<feature type="chain" id="PRO_0000372961" description="Neuraminidase">
    <location>
        <begin position="1"/>
        <end position="470"/>
    </location>
</feature>
<feature type="topological domain" description="Intravirion" evidence="1">
    <location>
        <begin position="1"/>
        <end position="6"/>
    </location>
</feature>
<feature type="transmembrane region" description="Helical" evidence="1">
    <location>
        <begin position="7"/>
        <end position="27"/>
    </location>
</feature>
<feature type="topological domain" description="Virion surface" evidence="1">
    <location>
        <begin position="28"/>
        <end position="470"/>
    </location>
</feature>
<feature type="region of interest" description="Involved in apical transport and lipid raft association" evidence="1">
    <location>
        <begin position="11"/>
        <end position="33"/>
    </location>
</feature>
<feature type="region of interest" description="Hypervariable stalk region" evidence="1">
    <location>
        <begin position="36"/>
        <end position="90"/>
    </location>
</feature>
<feature type="region of interest" description="Head of neuraminidase" evidence="1">
    <location>
        <begin position="91"/>
        <end position="470"/>
    </location>
</feature>
<feature type="active site" description="Proton donor/acceptor" evidence="1">
    <location>
        <position position="151"/>
    </location>
</feature>
<feature type="active site" description="Nucleophile" evidence="1">
    <location>
        <position position="402"/>
    </location>
</feature>
<feature type="binding site" evidence="1">
    <location>
        <position position="118"/>
    </location>
    <ligand>
        <name>substrate</name>
    </ligand>
</feature>
<feature type="binding site" evidence="1">
    <location>
        <position position="152"/>
    </location>
    <ligand>
        <name>substrate</name>
    </ligand>
</feature>
<feature type="binding site" evidence="1">
    <location>
        <begin position="277"/>
        <end position="278"/>
    </location>
    <ligand>
        <name>substrate</name>
    </ligand>
</feature>
<feature type="binding site" evidence="1">
    <location>
        <position position="293"/>
    </location>
    <ligand>
        <name>substrate</name>
    </ligand>
</feature>
<feature type="binding site" evidence="1">
    <location>
        <position position="294"/>
    </location>
    <ligand>
        <name>Ca(2+)</name>
        <dbReference type="ChEBI" id="CHEBI:29108"/>
    </ligand>
</feature>
<feature type="binding site" evidence="1">
    <location>
        <position position="298"/>
    </location>
    <ligand>
        <name>Ca(2+)</name>
        <dbReference type="ChEBI" id="CHEBI:29108"/>
    </ligand>
</feature>
<feature type="binding site" evidence="1">
    <location>
        <position position="324"/>
    </location>
    <ligand>
        <name>Ca(2+)</name>
        <dbReference type="ChEBI" id="CHEBI:29108"/>
    </ligand>
</feature>
<feature type="binding site" evidence="1">
    <location>
        <position position="368"/>
    </location>
    <ligand>
        <name>substrate</name>
    </ligand>
</feature>
<feature type="glycosylation site" description="N-linked (GlcNAc...) asparagine; by host" evidence="1">
    <location>
        <position position="44"/>
    </location>
</feature>
<feature type="glycosylation site" description="N-linked (GlcNAc...) asparagine; by host" evidence="1">
    <location>
        <position position="58"/>
    </location>
</feature>
<feature type="glycosylation site" description="N-linked (GlcNAc...) asparagine; by host" evidence="1">
    <location>
        <position position="63"/>
    </location>
</feature>
<feature type="glycosylation site" description="N-linked (GlcNAc...) asparagine; by host" evidence="1">
    <location>
        <position position="70"/>
    </location>
</feature>
<feature type="glycosylation site" description="N-linked (GlcNAc...) asparagine; by host" evidence="1">
    <location>
        <position position="88"/>
    </location>
</feature>
<feature type="glycosylation site" description="N-linked (GlcNAc...) asparagine; by host" evidence="1">
    <location>
        <position position="146"/>
    </location>
</feature>
<feature type="glycosylation site" description="N-linked (GlcNAc...) asparagine; by host" evidence="1">
    <location>
        <position position="235"/>
    </location>
</feature>
<feature type="glycosylation site" description="N-linked (GlcNAc...) asparagine; by host" evidence="1">
    <location>
        <position position="386"/>
    </location>
</feature>
<feature type="glycosylation site" description="N-linked (GlcNAc...) asparagine; by host" evidence="1">
    <location>
        <position position="434"/>
    </location>
</feature>
<feature type="glycosylation site" description="N-linked (GlcNAc...) asparagine; by host" evidence="1">
    <location>
        <position position="455"/>
    </location>
</feature>
<feature type="disulfide bond" evidence="1">
    <location>
        <begin position="92"/>
        <end position="417"/>
    </location>
</feature>
<feature type="disulfide bond" evidence="1">
    <location>
        <begin position="124"/>
        <end position="129"/>
    </location>
</feature>
<feature type="disulfide bond" evidence="1">
    <location>
        <begin position="184"/>
        <end position="231"/>
    </location>
</feature>
<feature type="disulfide bond" evidence="1">
    <location>
        <begin position="233"/>
        <end position="238"/>
    </location>
</feature>
<feature type="disulfide bond" evidence="1">
    <location>
        <begin position="279"/>
        <end position="292"/>
    </location>
</feature>
<feature type="disulfide bond" evidence="1">
    <location>
        <begin position="281"/>
        <end position="290"/>
    </location>
</feature>
<feature type="disulfide bond" evidence="1">
    <location>
        <begin position="318"/>
        <end position="335"/>
    </location>
</feature>
<feature type="disulfide bond" evidence="1">
    <location>
        <begin position="421"/>
        <end position="447"/>
    </location>
</feature>
<dbReference type="EC" id="3.2.1.18" evidence="1"/>
<dbReference type="EMBL" id="CY009206">
    <property type="protein sequence ID" value="ABD61521.1"/>
    <property type="molecule type" value="Genomic_RNA"/>
</dbReference>
<dbReference type="SMR" id="Q289M4"/>
<dbReference type="CAZy" id="GH34">
    <property type="family name" value="Glycoside Hydrolase Family 34"/>
</dbReference>
<dbReference type="GlyCosmos" id="Q289M4">
    <property type="glycosylation" value="10 sites, No reported glycans"/>
</dbReference>
<dbReference type="Proteomes" id="UP001366552">
    <property type="component" value="Genome"/>
</dbReference>
<dbReference type="GO" id="GO:0020002">
    <property type="term" value="C:host cell plasma membrane"/>
    <property type="evidence" value="ECO:0007669"/>
    <property type="project" value="UniProtKB-SubCell"/>
</dbReference>
<dbReference type="GO" id="GO:0016020">
    <property type="term" value="C:membrane"/>
    <property type="evidence" value="ECO:0007669"/>
    <property type="project" value="UniProtKB-UniRule"/>
</dbReference>
<dbReference type="GO" id="GO:0055036">
    <property type="term" value="C:virion membrane"/>
    <property type="evidence" value="ECO:0007669"/>
    <property type="project" value="UniProtKB-SubCell"/>
</dbReference>
<dbReference type="GO" id="GO:0004308">
    <property type="term" value="F:exo-alpha-sialidase activity"/>
    <property type="evidence" value="ECO:0007669"/>
    <property type="project" value="UniProtKB-UniRule"/>
</dbReference>
<dbReference type="GO" id="GO:0046872">
    <property type="term" value="F:metal ion binding"/>
    <property type="evidence" value="ECO:0007669"/>
    <property type="project" value="UniProtKB-UniRule"/>
</dbReference>
<dbReference type="GO" id="GO:0005975">
    <property type="term" value="P:carbohydrate metabolic process"/>
    <property type="evidence" value="ECO:0007669"/>
    <property type="project" value="InterPro"/>
</dbReference>
<dbReference type="GO" id="GO:0046761">
    <property type="term" value="P:viral budding from plasma membrane"/>
    <property type="evidence" value="ECO:0007669"/>
    <property type="project" value="UniProtKB-UniRule"/>
</dbReference>
<dbReference type="CDD" id="cd15483">
    <property type="entry name" value="Influenza_NA"/>
    <property type="match status" value="1"/>
</dbReference>
<dbReference type="FunFam" id="2.120.10.10:FF:000001">
    <property type="entry name" value="Neuraminidase"/>
    <property type="match status" value="1"/>
</dbReference>
<dbReference type="Gene3D" id="2.120.10.10">
    <property type="match status" value="1"/>
</dbReference>
<dbReference type="HAMAP" id="MF_04071">
    <property type="entry name" value="INFV_NRAM"/>
    <property type="match status" value="1"/>
</dbReference>
<dbReference type="InterPro" id="IPR001860">
    <property type="entry name" value="Glyco_hydro_34"/>
</dbReference>
<dbReference type="InterPro" id="IPR033654">
    <property type="entry name" value="Sialidase_Influenza_A/B"/>
</dbReference>
<dbReference type="InterPro" id="IPR036278">
    <property type="entry name" value="Sialidase_sf"/>
</dbReference>
<dbReference type="Pfam" id="PF00064">
    <property type="entry name" value="Neur"/>
    <property type="match status" value="1"/>
</dbReference>
<dbReference type="SUPFAM" id="SSF50939">
    <property type="entry name" value="Sialidases"/>
    <property type="match status" value="1"/>
</dbReference>
<name>NRAM_I00A1</name>
<organism>
    <name type="scientific">Influenza A virus (strain A/New Zealand:South Canterbury/35/2000 H1N1)</name>
    <dbReference type="NCBI Taxonomy" id="363066"/>
    <lineage>
        <taxon>Viruses</taxon>
        <taxon>Riboviria</taxon>
        <taxon>Orthornavirae</taxon>
        <taxon>Negarnaviricota</taxon>
        <taxon>Polyploviricotina</taxon>
        <taxon>Insthoviricetes</taxon>
        <taxon>Articulavirales</taxon>
        <taxon>Orthomyxoviridae</taxon>
        <taxon>Alphainfluenzavirus</taxon>
        <taxon>Alphainfluenzavirus influenzae</taxon>
        <taxon>Influenza A virus</taxon>
    </lineage>
</organism>
<evidence type="ECO:0000255" key="1">
    <source>
        <dbReference type="HAMAP-Rule" id="MF_04071"/>
    </source>
</evidence>
<keyword id="KW-0106">Calcium</keyword>
<keyword id="KW-1015">Disulfide bond</keyword>
<keyword id="KW-0325">Glycoprotein</keyword>
<keyword id="KW-0326">Glycosidase</keyword>
<keyword id="KW-1032">Host cell membrane</keyword>
<keyword id="KW-1043">Host membrane</keyword>
<keyword id="KW-0378">Hydrolase</keyword>
<keyword id="KW-0472">Membrane</keyword>
<keyword id="KW-0479">Metal-binding</keyword>
<keyword id="KW-0735">Signal-anchor</keyword>
<keyword id="KW-0812">Transmembrane</keyword>
<keyword id="KW-1133">Transmembrane helix</keyword>
<keyword id="KW-0946">Virion</keyword>
<organismHost>
    <name type="scientific">Aves</name>
    <dbReference type="NCBI Taxonomy" id="8782"/>
</organismHost>
<organismHost>
    <name type="scientific">Homo sapiens</name>
    <name type="common">Human</name>
    <dbReference type="NCBI Taxonomy" id="9606"/>
</organismHost>
<organismHost>
    <name type="scientific">Sus scrofa</name>
    <name type="common">Pig</name>
    <dbReference type="NCBI Taxonomy" id="9823"/>
</organismHost>
<proteinExistence type="inferred from homology"/>
<protein>
    <recommendedName>
        <fullName evidence="1">Neuraminidase</fullName>
        <ecNumber evidence="1">3.2.1.18</ecNumber>
    </recommendedName>
</protein>
<sequence length="470" mass="51639">MNPNQKIITIGSISIAIGIISLMLQIGNIISIWASHSIQTGSQNHTGICNQRIITYENSTWVNHTYVNINNTNVVAGKDKTSVTLAGNSSLCSISGWAIYTKDNSIRIGSKGDVFVIREPFISCSHLECRTFFLTQGALLNDKHSNGTVKDRSPYRALMSCPLGEAPSPYNSKFESVAWSASACHDGMGWLTIGISGPDNGAVAVLKYNGIITETIKSWKKRILRTQESECVCVNGSCFTIMTDGPSNGAASYKIFKIEKGKVTKSIELNAPNFHYEECSCYPDTGTVMCVCRDNWHGSNRPWVSFNQNLDYQIGYICSGVFGDNPRPKDGEGSCNPVTVDGADGVKGFSYKYGNGVWIGRTKSNRLRKGFEMIWDPNGWTDTDSNFSVKQDVVAITDWSGYSGSFVQHPELTGLDCIRPCFWVELVRGLPRENTTIWTSGSSISFCGVNSDTANWSWPDGAELPFTIDK</sequence>
<gene>
    <name evidence="1" type="primary">NA</name>
</gene>
<reference key="1">
    <citation type="submission" date="2006-03" db="EMBL/GenBank/DDBJ databases">
        <title>The NIAID influenza genome sequencing project.</title>
        <authorList>
            <person name="Ghedin E."/>
            <person name="Spiro D."/>
            <person name="Sengamalay N."/>
            <person name="Zaborsky J."/>
            <person name="Feldblyum T."/>
            <person name="Subbu V."/>
            <person name="Sparenborg J."/>
            <person name="Groveman L."/>
            <person name="Halpin R."/>
            <person name="Shumway M."/>
            <person name="Sitz J."/>
            <person name="Katzel D."/>
            <person name="Koo H."/>
            <person name="Salzberg S.L."/>
            <person name="Jennings L."/>
            <person name="Smit M."/>
            <person name="Wells V."/>
            <person name="Bao Y."/>
            <person name="Bolotov P."/>
            <person name="Dernovoy D."/>
            <person name="Kiryutin B."/>
            <person name="Lipman D.J."/>
            <person name="Tatusova T."/>
        </authorList>
    </citation>
    <scope>NUCLEOTIDE SEQUENCE [GENOMIC RNA]</scope>
</reference>
<reference key="2">
    <citation type="submission" date="2006-03" db="EMBL/GenBank/DDBJ databases">
        <authorList>
            <consortium name="The NIAID Influenza Genome Sequencing Consortium"/>
        </authorList>
    </citation>
    <scope>NUCLEOTIDE SEQUENCE [GENOMIC RNA]</scope>
</reference>